<keyword id="KW-0067">ATP-binding</keyword>
<keyword id="KW-0143">Chaperone</keyword>
<keyword id="KW-0963">Cytoplasm</keyword>
<keyword id="KW-0547">Nucleotide-binding</keyword>
<keyword id="KW-1185">Reference proteome</keyword>
<keyword id="KW-0346">Stress response</keyword>
<reference key="1">
    <citation type="journal article" date="2007" name="PLoS ONE">
        <title>The complete genome sequence and analysis of the Epsilonproteobacterium Arcobacter butzleri.</title>
        <authorList>
            <person name="Miller W.G."/>
            <person name="Parker C.T."/>
            <person name="Rubenfield M."/>
            <person name="Mendz G.L."/>
            <person name="Woesten M.M.S.M."/>
            <person name="Ussery D.W."/>
            <person name="Stolz J.F."/>
            <person name="Binnewies T.T."/>
            <person name="Hallin P.F."/>
            <person name="Wang G."/>
            <person name="Malek J.A."/>
            <person name="Rogosin A."/>
            <person name="Stanker L.H."/>
            <person name="Mandrell R.E."/>
        </authorList>
    </citation>
    <scope>NUCLEOTIDE SEQUENCE [LARGE SCALE GENOMIC DNA]</scope>
    <source>
        <strain>RM4018</strain>
    </source>
</reference>
<proteinExistence type="inferred from homology"/>
<evidence type="ECO:0000255" key="1">
    <source>
        <dbReference type="HAMAP-Rule" id="MF_00505"/>
    </source>
</evidence>
<accession>A8EV23</accession>
<name>HTPG_ALIB4</name>
<organism>
    <name type="scientific">Aliarcobacter butzleri (strain RM4018)</name>
    <name type="common">Arcobacter butzleri</name>
    <dbReference type="NCBI Taxonomy" id="367737"/>
    <lineage>
        <taxon>Bacteria</taxon>
        <taxon>Pseudomonadati</taxon>
        <taxon>Campylobacterota</taxon>
        <taxon>Epsilonproteobacteria</taxon>
        <taxon>Campylobacterales</taxon>
        <taxon>Arcobacteraceae</taxon>
        <taxon>Aliarcobacter</taxon>
    </lineage>
</organism>
<dbReference type="EMBL" id="CP000361">
    <property type="protein sequence ID" value="ABV67796.1"/>
    <property type="molecule type" value="Genomic_DNA"/>
</dbReference>
<dbReference type="RefSeq" id="WP_012013180.1">
    <property type="nucleotide sequence ID" value="NC_009850.1"/>
</dbReference>
<dbReference type="SMR" id="A8EV23"/>
<dbReference type="STRING" id="367737.Abu_1547"/>
<dbReference type="GeneID" id="24305671"/>
<dbReference type="KEGG" id="abu:Abu_1547"/>
<dbReference type="eggNOG" id="COG0326">
    <property type="taxonomic scope" value="Bacteria"/>
</dbReference>
<dbReference type="HOGENOM" id="CLU_006684_3_0_7"/>
<dbReference type="Proteomes" id="UP000001136">
    <property type="component" value="Chromosome"/>
</dbReference>
<dbReference type="GO" id="GO:0005737">
    <property type="term" value="C:cytoplasm"/>
    <property type="evidence" value="ECO:0007669"/>
    <property type="project" value="UniProtKB-SubCell"/>
</dbReference>
<dbReference type="GO" id="GO:0005524">
    <property type="term" value="F:ATP binding"/>
    <property type="evidence" value="ECO:0007669"/>
    <property type="project" value="UniProtKB-UniRule"/>
</dbReference>
<dbReference type="GO" id="GO:0016887">
    <property type="term" value="F:ATP hydrolysis activity"/>
    <property type="evidence" value="ECO:0007669"/>
    <property type="project" value="InterPro"/>
</dbReference>
<dbReference type="GO" id="GO:0140662">
    <property type="term" value="F:ATP-dependent protein folding chaperone"/>
    <property type="evidence" value="ECO:0007669"/>
    <property type="project" value="InterPro"/>
</dbReference>
<dbReference type="GO" id="GO:0051082">
    <property type="term" value="F:unfolded protein binding"/>
    <property type="evidence" value="ECO:0007669"/>
    <property type="project" value="UniProtKB-UniRule"/>
</dbReference>
<dbReference type="CDD" id="cd16927">
    <property type="entry name" value="HATPase_Hsp90-like"/>
    <property type="match status" value="1"/>
</dbReference>
<dbReference type="FunFam" id="3.30.565.10:FF:000009">
    <property type="entry name" value="Molecular chaperone HtpG"/>
    <property type="match status" value="1"/>
</dbReference>
<dbReference type="Gene3D" id="3.30.230.80">
    <property type="match status" value="1"/>
</dbReference>
<dbReference type="Gene3D" id="3.40.50.11260">
    <property type="match status" value="1"/>
</dbReference>
<dbReference type="Gene3D" id="1.20.120.790">
    <property type="entry name" value="Heat shock protein 90, C-terminal domain"/>
    <property type="match status" value="1"/>
</dbReference>
<dbReference type="Gene3D" id="3.30.565.10">
    <property type="entry name" value="Histidine kinase-like ATPase, C-terminal domain"/>
    <property type="match status" value="1"/>
</dbReference>
<dbReference type="HAMAP" id="MF_00505">
    <property type="entry name" value="HSP90"/>
    <property type="match status" value="1"/>
</dbReference>
<dbReference type="InterPro" id="IPR036890">
    <property type="entry name" value="HATPase_C_sf"/>
</dbReference>
<dbReference type="InterPro" id="IPR037196">
    <property type="entry name" value="HSP90_C"/>
</dbReference>
<dbReference type="InterPro" id="IPR001404">
    <property type="entry name" value="Hsp90_fam"/>
</dbReference>
<dbReference type="InterPro" id="IPR020575">
    <property type="entry name" value="Hsp90_N"/>
</dbReference>
<dbReference type="InterPro" id="IPR020568">
    <property type="entry name" value="Ribosomal_Su5_D2-typ_SF"/>
</dbReference>
<dbReference type="NCBIfam" id="NF003555">
    <property type="entry name" value="PRK05218.1"/>
    <property type="match status" value="1"/>
</dbReference>
<dbReference type="PANTHER" id="PTHR11528">
    <property type="entry name" value="HEAT SHOCK PROTEIN 90 FAMILY MEMBER"/>
    <property type="match status" value="1"/>
</dbReference>
<dbReference type="Pfam" id="PF13589">
    <property type="entry name" value="HATPase_c_3"/>
    <property type="match status" value="1"/>
</dbReference>
<dbReference type="Pfam" id="PF00183">
    <property type="entry name" value="HSP90"/>
    <property type="match status" value="1"/>
</dbReference>
<dbReference type="PIRSF" id="PIRSF002583">
    <property type="entry name" value="Hsp90"/>
    <property type="match status" value="1"/>
</dbReference>
<dbReference type="PRINTS" id="PR00775">
    <property type="entry name" value="HEATSHOCK90"/>
</dbReference>
<dbReference type="SMART" id="SM00387">
    <property type="entry name" value="HATPase_c"/>
    <property type="match status" value="1"/>
</dbReference>
<dbReference type="SUPFAM" id="SSF55874">
    <property type="entry name" value="ATPase domain of HSP90 chaperone/DNA topoisomerase II/histidine kinase"/>
    <property type="match status" value="1"/>
</dbReference>
<dbReference type="SUPFAM" id="SSF110942">
    <property type="entry name" value="HSP90 C-terminal domain"/>
    <property type="match status" value="1"/>
</dbReference>
<dbReference type="SUPFAM" id="SSF54211">
    <property type="entry name" value="Ribosomal protein S5 domain 2-like"/>
    <property type="match status" value="1"/>
</dbReference>
<protein>
    <recommendedName>
        <fullName evidence="1">Chaperone protein HtpG</fullName>
    </recommendedName>
    <alternativeName>
        <fullName evidence="1">Heat shock protein HtpG</fullName>
    </alternativeName>
    <alternativeName>
        <fullName evidence="1">High temperature protein G</fullName>
    </alternativeName>
</protein>
<feature type="chain" id="PRO_1000060524" description="Chaperone protein HtpG">
    <location>
        <begin position="1"/>
        <end position="636"/>
    </location>
</feature>
<feature type="region of interest" description="A; substrate-binding" evidence="1">
    <location>
        <begin position="1"/>
        <end position="349"/>
    </location>
</feature>
<feature type="region of interest" description="B" evidence="1">
    <location>
        <begin position="350"/>
        <end position="562"/>
    </location>
</feature>
<feature type="region of interest" description="C" evidence="1">
    <location>
        <begin position="563"/>
        <end position="636"/>
    </location>
</feature>
<comment type="function">
    <text evidence="1">Molecular chaperone. Has ATPase activity.</text>
</comment>
<comment type="subunit">
    <text evidence="1">Homodimer.</text>
</comment>
<comment type="subcellular location">
    <subcellularLocation>
        <location evidence="1">Cytoplasm</location>
    </subcellularLocation>
</comment>
<comment type="similarity">
    <text evidence="1">Belongs to the heat shock protein 90 family.</text>
</comment>
<gene>
    <name evidence="1" type="primary">htpG</name>
    <name type="ordered locus">Abu_1547</name>
</gene>
<sequence>MAKHQFQTEVGQLLHLMTHSLYSNKEIFIRELVSNASDAIDKLNYLRLTDENLKDKYAQWKGEINISFDEKDKSLSIIDNGIGMNEADLIASIGTIAKSGTKSFVEALTGDAKKDSNLIGQFGVGFYSVFMVADKVDVISKKAGEEQAYKWSSTGTGEFDLTPCTKESNGTVIYIKLKDEEAGEFASKYRIKNIVEKYSNHIAYPIFLNYDEEVSEALSEEDEKAGKKPEKKIERKHEQINAATALWMQPKAKLKEQDYNDFYKSISHDSSDPMLTIHTKTEGVNEYTTLFYIPKIAPMDMYRADFQSGVKLYVKRVFITDDEKELLPTYLRFVRGIIDSEDLPLNVSREILQENRILANIKQGSVKKILAEIKKLSKDEEKYAEFVAQYIRPLKEGVYQDYTNKEAILELLRYKSSKTEAGKMTSLEAYKERANSEQKAIYYIVGENEKVLRNSPLLESYKKNDIEVLILDDKEIDEIITPAIGAFKEWEFKDITAIEPPKVEQSEEEKKEVEEKFQDILSKIKDKLGDAVKDVKVTSRLSESPSCVVKDAADAQMAAMAHMFRAMGQAMPESAPILEINPEHEIVKKLNGCADEATIEDVSWILLDQAKLSEGMEITDTVAFAQRLSRITAKAL</sequence>